<gene>
    <name evidence="1" type="primary">rpsH</name>
    <name type="ordered locus">SSPA3071</name>
</gene>
<reference key="1">
    <citation type="journal article" date="2009" name="BMC Genomics">
        <title>Pseudogene accumulation in the evolutionary histories of Salmonella enterica serovars Paratyphi A and Typhi.</title>
        <authorList>
            <person name="Holt K.E."/>
            <person name="Thomson N.R."/>
            <person name="Wain J."/>
            <person name="Langridge G.C."/>
            <person name="Hasan R."/>
            <person name="Bhutta Z.A."/>
            <person name="Quail M.A."/>
            <person name="Norbertczak H."/>
            <person name="Walker D."/>
            <person name="Simmonds M."/>
            <person name="White B."/>
            <person name="Bason N."/>
            <person name="Mungall K."/>
            <person name="Dougan G."/>
            <person name="Parkhill J."/>
        </authorList>
    </citation>
    <scope>NUCLEOTIDE SEQUENCE [LARGE SCALE GENOMIC DNA]</scope>
    <source>
        <strain>AKU_12601</strain>
    </source>
</reference>
<feature type="chain" id="PRO_1000140610" description="Small ribosomal subunit protein uS8">
    <location>
        <begin position="1"/>
        <end position="130"/>
    </location>
</feature>
<name>RS8_SALPK</name>
<accession>B5BGX2</accession>
<keyword id="KW-0687">Ribonucleoprotein</keyword>
<keyword id="KW-0689">Ribosomal protein</keyword>
<keyword id="KW-0694">RNA-binding</keyword>
<keyword id="KW-0699">rRNA-binding</keyword>
<sequence length="130" mass="14127">MSMQDPIADMLTRIRNGQAANKAAVTMPSSKLKVAIANVLKEEGFIEDFKVEGDTKPELELTLKYFQGKAVVESIQRVSRPGLRIYKRKDELPKVMAGLGIAVVSTSKGVMTDRAARQAGLGGEIICYVA</sequence>
<dbReference type="EMBL" id="FM200053">
    <property type="protein sequence ID" value="CAR61322.1"/>
    <property type="molecule type" value="Genomic_DNA"/>
</dbReference>
<dbReference type="RefSeq" id="WP_000062611.1">
    <property type="nucleotide sequence ID" value="NC_011147.1"/>
</dbReference>
<dbReference type="SMR" id="B5BGX2"/>
<dbReference type="GeneID" id="93778681"/>
<dbReference type="KEGG" id="sek:SSPA3071"/>
<dbReference type="HOGENOM" id="CLU_098428_0_0_6"/>
<dbReference type="Proteomes" id="UP000001869">
    <property type="component" value="Chromosome"/>
</dbReference>
<dbReference type="GO" id="GO:1990904">
    <property type="term" value="C:ribonucleoprotein complex"/>
    <property type="evidence" value="ECO:0007669"/>
    <property type="project" value="UniProtKB-KW"/>
</dbReference>
<dbReference type="GO" id="GO:0005840">
    <property type="term" value="C:ribosome"/>
    <property type="evidence" value="ECO:0007669"/>
    <property type="project" value="UniProtKB-KW"/>
</dbReference>
<dbReference type="GO" id="GO:0019843">
    <property type="term" value="F:rRNA binding"/>
    <property type="evidence" value="ECO:0007669"/>
    <property type="project" value="UniProtKB-UniRule"/>
</dbReference>
<dbReference type="GO" id="GO:0003735">
    <property type="term" value="F:structural constituent of ribosome"/>
    <property type="evidence" value="ECO:0007669"/>
    <property type="project" value="InterPro"/>
</dbReference>
<dbReference type="GO" id="GO:0006412">
    <property type="term" value="P:translation"/>
    <property type="evidence" value="ECO:0007669"/>
    <property type="project" value="UniProtKB-UniRule"/>
</dbReference>
<dbReference type="FunFam" id="3.30.1370.30:FF:000003">
    <property type="entry name" value="30S ribosomal protein S8"/>
    <property type="match status" value="1"/>
</dbReference>
<dbReference type="FunFam" id="3.30.1490.10:FF:000001">
    <property type="entry name" value="30S ribosomal protein S8"/>
    <property type="match status" value="1"/>
</dbReference>
<dbReference type="Gene3D" id="3.30.1370.30">
    <property type="match status" value="1"/>
</dbReference>
<dbReference type="Gene3D" id="3.30.1490.10">
    <property type="match status" value="1"/>
</dbReference>
<dbReference type="HAMAP" id="MF_01302_B">
    <property type="entry name" value="Ribosomal_uS8_B"/>
    <property type="match status" value="1"/>
</dbReference>
<dbReference type="InterPro" id="IPR000630">
    <property type="entry name" value="Ribosomal_uS8"/>
</dbReference>
<dbReference type="InterPro" id="IPR047863">
    <property type="entry name" value="Ribosomal_uS8_CS"/>
</dbReference>
<dbReference type="InterPro" id="IPR035987">
    <property type="entry name" value="Ribosomal_uS8_sf"/>
</dbReference>
<dbReference type="NCBIfam" id="NF001109">
    <property type="entry name" value="PRK00136.1"/>
    <property type="match status" value="1"/>
</dbReference>
<dbReference type="PANTHER" id="PTHR11758">
    <property type="entry name" value="40S RIBOSOMAL PROTEIN S15A"/>
    <property type="match status" value="1"/>
</dbReference>
<dbReference type="Pfam" id="PF00410">
    <property type="entry name" value="Ribosomal_S8"/>
    <property type="match status" value="1"/>
</dbReference>
<dbReference type="SUPFAM" id="SSF56047">
    <property type="entry name" value="Ribosomal protein S8"/>
    <property type="match status" value="1"/>
</dbReference>
<dbReference type="PROSITE" id="PS00053">
    <property type="entry name" value="RIBOSOMAL_S8"/>
    <property type="match status" value="1"/>
</dbReference>
<organism>
    <name type="scientific">Salmonella paratyphi A (strain AKU_12601)</name>
    <dbReference type="NCBI Taxonomy" id="554290"/>
    <lineage>
        <taxon>Bacteria</taxon>
        <taxon>Pseudomonadati</taxon>
        <taxon>Pseudomonadota</taxon>
        <taxon>Gammaproteobacteria</taxon>
        <taxon>Enterobacterales</taxon>
        <taxon>Enterobacteriaceae</taxon>
        <taxon>Salmonella</taxon>
    </lineage>
</organism>
<proteinExistence type="inferred from homology"/>
<evidence type="ECO:0000255" key="1">
    <source>
        <dbReference type="HAMAP-Rule" id="MF_01302"/>
    </source>
</evidence>
<evidence type="ECO:0000305" key="2"/>
<protein>
    <recommendedName>
        <fullName evidence="1">Small ribosomal subunit protein uS8</fullName>
    </recommendedName>
    <alternativeName>
        <fullName evidence="2">30S ribosomal protein S8</fullName>
    </alternativeName>
</protein>
<comment type="function">
    <text evidence="1">One of the primary rRNA binding proteins, it binds directly to 16S rRNA central domain where it helps coordinate assembly of the platform of the 30S subunit.</text>
</comment>
<comment type="subunit">
    <text evidence="1">Part of the 30S ribosomal subunit. Contacts proteins S5 and S12.</text>
</comment>
<comment type="similarity">
    <text evidence="1">Belongs to the universal ribosomal protein uS8 family.</text>
</comment>